<organism>
    <name type="scientific">Alternaria alternata</name>
    <name type="common">Alternaria rot fungus</name>
    <name type="synonym">Torula alternata</name>
    <dbReference type="NCBI Taxonomy" id="5599"/>
    <lineage>
        <taxon>Eukaryota</taxon>
        <taxon>Fungi</taxon>
        <taxon>Dikarya</taxon>
        <taxon>Ascomycota</taxon>
        <taxon>Pezizomycotina</taxon>
        <taxon>Dothideomycetes</taxon>
        <taxon>Pleosporomycetidae</taxon>
        <taxon>Pleosporales</taxon>
        <taxon>Pleosporineae</taxon>
        <taxon>Pleosporaceae</taxon>
        <taxon>Alternaria</taxon>
        <taxon>Alternaria sect. Alternaria</taxon>
        <taxon>Alternaria alternata complex</taxon>
    </lineage>
</organism>
<name>NMTDH_ALTAL</name>
<protein>
    <recommendedName>
        <fullName evidence="5">NADP-dependent mannitol dehydrogenase</fullName>
        <shortName>MtDH</shortName>
        <ecNumber evidence="3">1.1.1.138</ecNumber>
    </recommendedName>
    <alternativeName>
        <fullName>Mannitol 2-dehydrogenase [NADP(+)]</fullName>
    </alternativeName>
    <allergenName>Alt a 8</allergenName>
</protein>
<keyword id="KW-0020">Allergen</keyword>
<keyword id="KW-0521">NADP</keyword>
<keyword id="KW-0560">Oxidoreductase</keyword>
<keyword id="KW-0926">Vacuole</keyword>
<comment type="catalytic activity">
    <reaction evidence="3">
        <text>D-mannitol + NADP(+) = D-fructose + NADPH + H(+)</text>
        <dbReference type="Rhea" id="RHEA:16765"/>
        <dbReference type="ChEBI" id="CHEBI:15378"/>
        <dbReference type="ChEBI" id="CHEBI:16899"/>
        <dbReference type="ChEBI" id="CHEBI:37721"/>
        <dbReference type="ChEBI" id="CHEBI:57783"/>
        <dbReference type="ChEBI" id="CHEBI:58349"/>
        <dbReference type="EC" id="1.1.1.138"/>
    </reaction>
</comment>
<comment type="biophysicochemical properties">
    <kinetics>
        <KM evidence="3">474 mM for D-fructose</KM>
        <KM evidence="3">18.7 uM for NADPH</KM>
    </kinetics>
</comment>
<comment type="subunit">
    <text evidence="2">Homotetramer.</text>
</comment>
<comment type="subcellular location">
    <subcellularLocation>
        <location evidence="4">Vacuole</location>
    </subcellularLocation>
</comment>
<comment type="mass spectrometry"/>
<comment type="allergen">
    <text evidence="3">Causes an allergic reaction in human. Binds to IgE.</text>
</comment>
<comment type="similarity">
    <text evidence="6">Belongs to the short-chain dehydrogenases/reductases (SDR) family.</text>
</comment>
<evidence type="ECO:0000250" key="1">
    <source>
        <dbReference type="UniProtKB" id="L0E2Z4"/>
    </source>
</evidence>
<evidence type="ECO:0000250" key="2">
    <source>
        <dbReference type="UniProtKB" id="O93868"/>
    </source>
</evidence>
<evidence type="ECO:0000269" key="3">
    <source>
    </source>
</evidence>
<evidence type="ECO:0000269" key="4">
    <source>
    </source>
</evidence>
<evidence type="ECO:0000303" key="5">
    <source>
    </source>
</evidence>
<evidence type="ECO:0000305" key="6"/>
<accession>P0C0Y4</accession>
<accession>Q2TV80</accession>
<accession>Q8J231</accession>
<dbReference type="EC" id="1.1.1.138" evidence="3"/>
<dbReference type="EMBL" id="AY191815">
    <property type="protein sequence ID" value="AAO91800.1"/>
    <property type="molecule type" value="mRNA"/>
</dbReference>
<dbReference type="EMBL" id="AF541874">
    <property type="protein sequence ID" value="AAN28666.1"/>
    <property type="molecule type" value="Genomic_DNA"/>
</dbReference>
<dbReference type="RefSeq" id="XP_018388094.1">
    <property type="nucleotide sequence ID" value="XM_018534204.1"/>
</dbReference>
<dbReference type="SMR" id="P0C0Y4"/>
<dbReference type="Allergome" id="22">
    <property type="allergen name" value="Alt a 8"/>
</dbReference>
<dbReference type="Allergome" id="3065">
    <property type="allergen name" value="Alt a 8.0101"/>
</dbReference>
<dbReference type="GeneID" id="29119798"/>
<dbReference type="KEGG" id="aalt:CC77DRAFT_931278"/>
<dbReference type="VEuPathDB" id="FungiDB:CC77DRAFT_931278"/>
<dbReference type="BRENDA" id="1.1.1.138">
    <property type="organism ID" value="267"/>
</dbReference>
<dbReference type="SABIO-RK" id="P0C0Y4"/>
<dbReference type="GO" id="GO:0005773">
    <property type="term" value="C:vacuole"/>
    <property type="evidence" value="ECO:0000314"/>
    <property type="project" value="UniProtKB"/>
</dbReference>
<dbReference type="GO" id="GO:0050085">
    <property type="term" value="F:mannitol 2-dehydrogenase (NADP+) activity"/>
    <property type="evidence" value="ECO:0000314"/>
    <property type="project" value="UniProtKB"/>
</dbReference>
<dbReference type="GO" id="GO:0050661">
    <property type="term" value="F:NADP binding"/>
    <property type="evidence" value="ECO:0000250"/>
    <property type="project" value="UniProtKB"/>
</dbReference>
<dbReference type="GO" id="GO:0050664">
    <property type="term" value="F:oxidoreductase activity, acting on NAD(P)H, oxygen as acceptor"/>
    <property type="evidence" value="ECO:0007669"/>
    <property type="project" value="TreeGrafter"/>
</dbReference>
<dbReference type="GO" id="GO:0019594">
    <property type="term" value="P:mannitol metabolic process"/>
    <property type="evidence" value="ECO:0000314"/>
    <property type="project" value="UniProtKB"/>
</dbReference>
<dbReference type="GO" id="GO:0051289">
    <property type="term" value="P:protein homotetramerization"/>
    <property type="evidence" value="ECO:0000250"/>
    <property type="project" value="UniProtKB"/>
</dbReference>
<dbReference type="CDD" id="cd05352">
    <property type="entry name" value="MDH-like_SDR_c"/>
    <property type="match status" value="1"/>
</dbReference>
<dbReference type="FunFam" id="3.40.50.720:FF:000090">
    <property type="entry name" value="NADP-dependent mannitol dehydrogenase"/>
    <property type="match status" value="1"/>
</dbReference>
<dbReference type="Gene3D" id="3.40.50.720">
    <property type="entry name" value="NAD(P)-binding Rossmann-like Domain"/>
    <property type="match status" value="1"/>
</dbReference>
<dbReference type="InterPro" id="IPR036291">
    <property type="entry name" value="NAD(P)-bd_dom_sf"/>
</dbReference>
<dbReference type="InterPro" id="IPR002347">
    <property type="entry name" value="SDR_fam"/>
</dbReference>
<dbReference type="PANTHER" id="PTHR43008">
    <property type="entry name" value="BENZIL REDUCTASE"/>
    <property type="match status" value="1"/>
</dbReference>
<dbReference type="PANTHER" id="PTHR43008:SF3">
    <property type="entry name" value="MANNITOL DEHYDROGENASE"/>
    <property type="match status" value="1"/>
</dbReference>
<dbReference type="Pfam" id="PF13561">
    <property type="entry name" value="adh_short_C2"/>
    <property type="match status" value="1"/>
</dbReference>
<dbReference type="PRINTS" id="PR00081">
    <property type="entry name" value="GDHRDH"/>
</dbReference>
<dbReference type="PRINTS" id="PR00080">
    <property type="entry name" value="SDRFAMILY"/>
</dbReference>
<dbReference type="SUPFAM" id="SSF51735">
    <property type="entry name" value="NAD(P)-binding Rossmann-fold domains"/>
    <property type="match status" value="1"/>
</dbReference>
<reference key="1">
    <citation type="journal article" date="2006" name="Clin. Exp. Allergy">
        <title>Alternaria alternata NADP-dependent mannitol dehydrogenase is an important fungal allergen.</title>
        <authorList>
            <person name="Schneider P.B."/>
            <person name="Denk U."/>
            <person name="Breitenbach M."/>
            <person name="Richter K."/>
            <person name="Schmid-Grendelmeier P."/>
            <person name="Nobbe S."/>
            <person name="Himly M."/>
            <person name="Mari A."/>
            <person name="Ebner C."/>
            <person name="Simon-Nobbe B."/>
        </authorList>
    </citation>
    <scope>NUCLEOTIDE SEQUENCE [MRNA]</scope>
    <scope>CATALYTIC ACTIVITY</scope>
    <scope>BIOPHYSICOCHEMICAL PROPERTIES</scope>
    <scope>MASS SPECTROMETRY</scope>
    <scope>ALLERGEN</scope>
    <source>
        <strain>08-0203-Berlin</strain>
    </source>
</reference>
<reference key="2">
    <citation type="submission" date="2002-08" db="EMBL/GenBank/DDBJ databases">
        <title>Alternaria alternata mannitol metabolism in plant-pathogen interactions.</title>
        <authorList>
            <person name="Velez H."/>
            <person name="Ehrenshaft M."/>
            <person name="Daub M.E."/>
        </authorList>
    </citation>
    <scope>NUCLEOTIDE SEQUENCE [GENOMIC DNA]</scope>
    <source>
        <strain>A5</strain>
    </source>
</reference>
<reference key="3">
    <citation type="journal article" date="2012" name="J. Allergy Clin. Immunol.">
        <title>Predominant localization of the major Alternaria allergen Alt a 1 in the cell wall of airborne spores.</title>
        <authorList>
            <person name="Twaroch T.E."/>
            <person name="Arcalis E."/>
            <person name="Sterflinger K."/>
            <person name="Stoeger E."/>
            <person name="Swoboda I."/>
            <person name="Valenta R."/>
        </authorList>
    </citation>
    <scope>SUBCELLULAR LOCATION</scope>
</reference>
<proteinExistence type="evidence at protein level"/>
<sequence>MPISVPQATELKDLFSLKGKVVIVTGASGPTGIGTEAARGCAEYGADLAITYNSRAEGAEKNAKEMSEKYGVKVKAYKCQVNEYAQCEKLVQDVIKDFGKVDVFIANAGKTADNGILDATVEQWNEVIQTDLTGTFNCARAVGLHFRERKTGSLVITSSMSGHIANFPQEQASYNVAKAGCIHLAKSLANEWRDFARVNSISPGYIDTGLSDFVPQDIQKLWHSMIPMGRDAKATELKGAYVYFASDASSYCTGSDLLIDGGYCVR</sequence>
<feature type="chain" id="PRO_0000054727" description="NADP-dependent mannitol dehydrogenase">
    <location>
        <begin position="1"/>
        <end position="266"/>
    </location>
</feature>
<feature type="active site" description="Proton donor" evidence="2">
    <location>
        <position position="159"/>
    </location>
</feature>
<feature type="active site" description="Proton acceptor" evidence="2">
    <location>
        <position position="174"/>
    </location>
</feature>
<feature type="active site" description="Lowers pKa of active site Tyr" evidence="2">
    <location>
        <position position="178"/>
    </location>
</feature>
<feature type="binding site" evidence="1">
    <location>
        <position position="31"/>
    </location>
    <ligand>
        <name>NADP(+)</name>
        <dbReference type="ChEBI" id="CHEBI:58349"/>
    </ligand>
</feature>
<feature type="binding site" evidence="1">
    <location>
        <position position="33"/>
    </location>
    <ligand>
        <name>NADP(+)</name>
        <dbReference type="ChEBI" id="CHEBI:58349"/>
    </ligand>
</feature>
<feature type="binding site" evidence="2">
    <location>
        <position position="107"/>
    </location>
    <ligand>
        <name>NADP(+)</name>
        <dbReference type="ChEBI" id="CHEBI:58349"/>
    </ligand>
</feature>
<feature type="binding site" evidence="1">
    <location>
        <position position="140"/>
    </location>
    <ligand>
        <name>NADP(+)</name>
        <dbReference type="ChEBI" id="CHEBI:58349"/>
    </ligand>
</feature>
<feature type="binding site" evidence="2">
    <location>
        <position position="174"/>
    </location>
    <ligand>
        <name>NADP(+)</name>
        <dbReference type="ChEBI" id="CHEBI:58349"/>
    </ligand>
</feature>
<feature type="binding site" evidence="2">
    <location>
        <position position="178"/>
    </location>
    <ligand>
        <name>NADP(+)</name>
        <dbReference type="ChEBI" id="CHEBI:58349"/>
    </ligand>
</feature>
<feature type="binding site" evidence="2">
    <location>
        <position position="206"/>
    </location>
    <ligand>
        <name>NADP(+)</name>
        <dbReference type="ChEBI" id="CHEBI:58349"/>
    </ligand>
</feature>
<feature type="binding site" evidence="1">
    <location>
        <position position="208"/>
    </location>
    <ligand>
        <name>NADP(+)</name>
        <dbReference type="ChEBI" id="CHEBI:58349"/>
    </ligand>
</feature>
<feature type="sequence conflict" description="In Ref. 1; AAO91800." evidence="6" ref="1">
    <original>S</original>
    <variation>T</variation>
    <location>
        <position position="4"/>
    </location>
</feature>